<protein>
    <recommendedName>
        <fullName>Gremlin-1</fullName>
    </recommendedName>
</protein>
<organism>
    <name type="scientific">Macaca mulatta</name>
    <name type="common">Rhesus macaque</name>
    <dbReference type="NCBI Taxonomy" id="9544"/>
    <lineage>
        <taxon>Eukaryota</taxon>
        <taxon>Metazoa</taxon>
        <taxon>Chordata</taxon>
        <taxon>Craniata</taxon>
        <taxon>Vertebrata</taxon>
        <taxon>Euteleostomi</taxon>
        <taxon>Mammalia</taxon>
        <taxon>Eutheria</taxon>
        <taxon>Euarchontoglires</taxon>
        <taxon>Primates</taxon>
        <taxon>Haplorrhini</taxon>
        <taxon>Catarrhini</taxon>
        <taxon>Cercopithecidae</taxon>
        <taxon>Cercopithecinae</taxon>
        <taxon>Macaca</taxon>
    </lineage>
</organism>
<proteinExistence type="evidence at transcript level"/>
<dbReference type="EMBL" id="AF439783">
    <property type="protein sequence ID" value="AAL32022.1"/>
    <property type="molecule type" value="mRNA"/>
</dbReference>
<dbReference type="RefSeq" id="NP_001028020.1">
    <property type="nucleotide sequence ID" value="NM_001032848.1"/>
</dbReference>
<dbReference type="SMR" id="Q8WNY1"/>
<dbReference type="FunCoup" id="Q8WNY1">
    <property type="interactions" value="194"/>
</dbReference>
<dbReference type="STRING" id="9544.ENSMMUP00000002409"/>
<dbReference type="GlyCosmos" id="Q8WNY1">
    <property type="glycosylation" value="1 site, No reported glycans"/>
</dbReference>
<dbReference type="PaxDb" id="9544-ENSMMUP00000002409"/>
<dbReference type="GeneID" id="574176"/>
<dbReference type="KEGG" id="mcc:574176"/>
<dbReference type="CTD" id="26585"/>
<dbReference type="eggNOG" id="ENOG502QQ5X">
    <property type="taxonomic scope" value="Eukaryota"/>
</dbReference>
<dbReference type="HOGENOM" id="CLU_101024_0_0_1"/>
<dbReference type="InParanoid" id="Q8WNY1"/>
<dbReference type="OrthoDB" id="10061784at2759"/>
<dbReference type="TreeFam" id="TF106445"/>
<dbReference type="Proteomes" id="UP000006718">
    <property type="component" value="Unassembled WGS sequence"/>
</dbReference>
<dbReference type="GO" id="GO:0005615">
    <property type="term" value="C:extracellular space"/>
    <property type="evidence" value="ECO:0000318"/>
    <property type="project" value="GO_Central"/>
</dbReference>
<dbReference type="GO" id="GO:0036122">
    <property type="term" value="F:BMP binding"/>
    <property type="evidence" value="ECO:0000250"/>
    <property type="project" value="UniProtKB"/>
</dbReference>
<dbReference type="GO" id="GO:0005125">
    <property type="term" value="F:cytokine activity"/>
    <property type="evidence" value="ECO:0007669"/>
    <property type="project" value="UniProtKB-KW"/>
</dbReference>
<dbReference type="GO" id="GO:0048018">
    <property type="term" value="F:receptor ligand activity"/>
    <property type="evidence" value="ECO:0000318"/>
    <property type="project" value="GO_Central"/>
</dbReference>
<dbReference type="GO" id="GO:0030514">
    <property type="term" value="P:negative regulation of BMP signaling pathway"/>
    <property type="evidence" value="ECO:0000250"/>
    <property type="project" value="UniProtKB"/>
</dbReference>
<dbReference type="GO" id="GO:0045668">
    <property type="term" value="P:negative regulation of osteoblast differentiation"/>
    <property type="evidence" value="ECO:0000250"/>
    <property type="project" value="UniProtKB"/>
</dbReference>
<dbReference type="GO" id="GO:0038098">
    <property type="term" value="P:sequestering of BMP from receptor via BMP binding"/>
    <property type="evidence" value="ECO:0000318"/>
    <property type="project" value="GO_Central"/>
</dbReference>
<dbReference type="FunFam" id="2.10.90.10:FF:000013">
    <property type="entry name" value="Gremlin"/>
    <property type="match status" value="1"/>
</dbReference>
<dbReference type="Gene3D" id="2.10.90.10">
    <property type="entry name" value="Cystine-knot cytokines"/>
    <property type="match status" value="1"/>
</dbReference>
<dbReference type="InterPro" id="IPR006207">
    <property type="entry name" value="Cys_knot_C"/>
</dbReference>
<dbReference type="InterPro" id="IPR029034">
    <property type="entry name" value="Cystine-knot_cytokine"/>
</dbReference>
<dbReference type="InterPro" id="IPR004133">
    <property type="entry name" value="DAN"/>
</dbReference>
<dbReference type="InterPro" id="IPR017159">
    <property type="entry name" value="Gremlin-1/2"/>
</dbReference>
<dbReference type="PANTHER" id="PTHR15283">
    <property type="entry name" value="GREMLIN 1"/>
    <property type="match status" value="1"/>
</dbReference>
<dbReference type="PANTHER" id="PTHR15283:SF3">
    <property type="entry name" value="GREMLIN-1"/>
    <property type="match status" value="1"/>
</dbReference>
<dbReference type="Pfam" id="PF03045">
    <property type="entry name" value="DAN"/>
    <property type="match status" value="1"/>
</dbReference>
<dbReference type="PIRSF" id="PIRSF037254">
    <property type="entry name" value="Gremlin_precursor"/>
    <property type="match status" value="1"/>
</dbReference>
<dbReference type="SMART" id="SM00041">
    <property type="entry name" value="CT"/>
    <property type="match status" value="1"/>
</dbReference>
<sequence length="184" mass="20697">MSRTAYTVGALLLLLGTLLPAAEGKKKGSQGAIPPPDKAQHNDSEQTQSPQQPGSRNRGRGQGRGTAMPGEEVLESSQEALHVTERKYLKRDWCKTQPLKQTIHEEGCNSRTIINRFCYGQCNSFYIPRHIRKEEGSFQSCSFCKPKKFTTMMVTLNCPELQPPTKKKRVTRVKQCRCISIDLD</sequence>
<gene>
    <name type="primary">GREM1</name>
</gene>
<comment type="function">
    <text evidence="2 3 4">Cytokine that may play an important role during carcinogenesis and metanephric kidney organogenesis, as a BMP antagonist required for early limb outgrowth and patterning in maintaining the FGF4-SHH feedback loop. Down-regulates the BMP4 signaling in a dose-dependent manner (By similarity). Antagonist of BMP2; inhibits BMP2-mediated differentiation of osteoblasts (in vitro) (By similarity). Acts as inhibitor of monocyte chemotaxis. Can inhibit the growth or viability of normal cells but not transformed cells when is overexpressed (By similarity).</text>
</comment>
<comment type="subunit">
    <text evidence="2 3">Homodimer; can also form homooligomers. Interacts with BMP2; can form higher oligomers with BMP2 (By similarity). Interacts with SLIT1 and SLIT2 in a glycosylation-dependent manner (By similarity).</text>
</comment>
<comment type="subcellular location">
    <subcellularLocation>
        <location evidence="7">Secreted</location>
    </subcellularLocation>
</comment>
<comment type="similarity">
    <text evidence="7">Belongs to the DAN family.</text>
</comment>
<accession>Q8WNY1</accession>
<feature type="signal peptide" evidence="1">
    <location>
        <begin position="1"/>
        <end position="24"/>
    </location>
</feature>
<feature type="chain" id="PRO_0000006715" description="Gremlin-1">
    <location>
        <begin position="25"/>
        <end position="184"/>
    </location>
</feature>
<feature type="domain" description="CTCK">
    <location>
        <begin position="94"/>
        <end position="184"/>
    </location>
</feature>
<feature type="region of interest" description="Disordered" evidence="6">
    <location>
        <begin position="24"/>
        <end position="77"/>
    </location>
</feature>
<feature type="glycosylation site" description="N-linked (GlcNAc...) asparagine" evidence="5">
    <location>
        <position position="42"/>
    </location>
</feature>
<feature type="disulfide bond" evidence="3">
    <location>
        <begin position="94"/>
        <end position="144"/>
    </location>
</feature>
<feature type="disulfide bond" evidence="3">
    <location>
        <begin position="108"/>
        <end position="158"/>
    </location>
</feature>
<feature type="disulfide bond" evidence="3">
    <location>
        <begin position="118"/>
        <end position="176"/>
    </location>
</feature>
<feature type="disulfide bond" evidence="3">
    <location>
        <begin position="122"/>
        <end position="178"/>
    </location>
</feature>
<keyword id="KW-0202">Cytokine</keyword>
<keyword id="KW-1015">Disulfide bond</keyword>
<keyword id="KW-0325">Glycoprotein</keyword>
<keyword id="KW-1185">Reference proteome</keyword>
<keyword id="KW-0964">Secreted</keyword>
<keyword id="KW-0732">Signal</keyword>
<reference key="1">
    <citation type="submission" date="2001-10" db="EMBL/GenBank/DDBJ databases">
        <authorList>
            <person name="Christenson L.K."/>
            <person name="Duffy D.M."/>
        </authorList>
    </citation>
    <scope>NUCLEOTIDE SEQUENCE [MRNA]</scope>
</reference>
<evidence type="ECO:0000250" key="1"/>
<evidence type="ECO:0000250" key="2">
    <source>
        <dbReference type="UniProtKB" id="O35793"/>
    </source>
</evidence>
<evidence type="ECO:0000250" key="3">
    <source>
        <dbReference type="UniProtKB" id="O60565"/>
    </source>
</evidence>
<evidence type="ECO:0000250" key="4">
    <source>
        <dbReference type="UniProtKB" id="O70326"/>
    </source>
</evidence>
<evidence type="ECO:0000255" key="5"/>
<evidence type="ECO:0000256" key="6">
    <source>
        <dbReference type="SAM" id="MobiDB-lite"/>
    </source>
</evidence>
<evidence type="ECO:0000305" key="7"/>
<name>GREM1_MACMU</name>